<feature type="chain" id="PRO_0000165317" description="Uncharacterized 8.9 kDa protein in int-C1 intergenic region">
    <location>
        <begin position="1"/>
        <end position="77"/>
    </location>
</feature>
<organism>
    <name type="scientific">Haemophilus phage HP1 (strain HP1c1)</name>
    <name type="common">Bacteriophage HP1</name>
    <dbReference type="NCBI Taxonomy" id="1289570"/>
    <lineage>
        <taxon>Viruses</taxon>
        <taxon>Duplodnaviria</taxon>
        <taxon>Heunggongvirae</taxon>
        <taxon>Uroviricota</taxon>
        <taxon>Caudoviricetes</taxon>
        <taxon>Peduoviridae</taxon>
        <taxon>Hpunavirus</taxon>
        <taxon>Haemophilus phage HP1</taxon>
    </lineage>
</organism>
<organismHost>
    <name type="scientific">Haemophilus influenzae</name>
    <dbReference type="NCBI Taxonomy" id="727"/>
</organismHost>
<accession>P51702</accession>
<sequence length="77" mass="8924">MAYTYKMVQVPPNIIANRKNITTAAADYLQDVVNEWAENGWEFWRIDNFSTEEKAGCLSGGKLTMRTYKVITFRKEV</sequence>
<dbReference type="EMBL" id="U24159">
    <property type="protein sequence ID" value="AAB09185.1"/>
    <property type="molecule type" value="Genomic_DNA"/>
</dbReference>
<dbReference type="PIR" id="S72332">
    <property type="entry name" value="S72332"/>
</dbReference>
<dbReference type="RefSeq" id="NP_043469.1">
    <property type="nucleotide sequence ID" value="NC_001697.1"/>
</dbReference>
<dbReference type="GeneID" id="1261141"/>
<dbReference type="KEGG" id="vg:1261141"/>
<dbReference type="Proteomes" id="UP000001713">
    <property type="component" value="Segment"/>
</dbReference>
<proteinExistence type="predicted"/>
<protein>
    <recommendedName>
        <fullName>Uncharacterized 8.9 kDa protein in int-C1 intergenic region</fullName>
    </recommendedName>
    <alternativeName>
        <fullName>ORF17</fullName>
    </alternativeName>
    <alternativeName>
        <fullName>ORF3</fullName>
    </alternativeName>
</protein>
<reference key="1">
    <citation type="journal article" date="1994" name="Mol. Microbiol.">
        <title>Identification of an HP1 phage protein required for site-specific excision.</title>
        <authorList>
            <person name="Esposito D."/>
            <person name="Scocca J.J."/>
        </authorList>
    </citation>
    <scope>NUCLEOTIDE SEQUENCE [GENOMIC DNA]</scope>
</reference>
<reference key="2">
    <citation type="journal article" date="1996" name="Nucleic Acids Res.">
        <title>The complete nucleotide sequence of bacteriophage HP1 DNA.</title>
        <authorList>
            <person name="Esposito D."/>
            <person name="Fitzmaurice W.P."/>
            <person name="Benjamin R.C."/>
            <person name="Goodman S.D."/>
            <person name="Waldman A.S."/>
            <person name="Scocca J.J."/>
        </authorList>
    </citation>
    <scope>NUCLEOTIDE SEQUENCE [LARGE SCALE GENOMIC DNA]</scope>
</reference>
<name>YO03_BPHC1</name>
<keyword id="KW-1185">Reference proteome</keyword>